<evidence type="ECO:0000255" key="1">
    <source>
        <dbReference type="HAMAP-Rule" id="MF_01347"/>
    </source>
</evidence>
<comment type="function">
    <text evidence="1">Produces ATP from ADP in the presence of a proton gradient across the membrane. The catalytic sites are hosted primarily by the beta subunits.</text>
</comment>
<comment type="catalytic activity">
    <reaction evidence="1">
        <text>ATP + H2O + 4 H(+)(in) = ADP + phosphate + 5 H(+)(out)</text>
        <dbReference type="Rhea" id="RHEA:57720"/>
        <dbReference type="ChEBI" id="CHEBI:15377"/>
        <dbReference type="ChEBI" id="CHEBI:15378"/>
        <dbReference type="ChEBI" id="CHEBI:30616"/>
        <dbReference type="ChEBI" id="CHEBI:43474"/>
        <dbReference type="ChEBI" id="CHEBI:456216"/>
        <dbReference type="EC" id="7.1.2.2"/>
    </reaction>
</comment>
<comment type="subunit">
    <text evidence="1">F-type ATPases have 2 components, CF(1) - the catalytic core - and CF(0) - the membrane proton channel. CF(1) has five subunits: alpha(3), beta(3), gamma(1), delta(1), epsilon(1). CF(0) has three main subunits: a(1), b(2) and c(9-12). The alpha and beta chains form an alternating ring which encloses part of the gamma chain. CF(1) is attached to CF(0) by a central stalk formed by the gamma and epsilon chains, while a peripheral stalk is formed by the delta and b chains.</text>
</comment>
<comment type="subcellular location">
    <subcellularLocation>
        <location evidence="1">Cell inner membrane</location>
        <topology evidence="1">Peripheral membrane protein</topology>
    </subcellularLocation>
</comment>
<comment type="similarity">
    <text evidence="1">Belongs to the ATPase alpha/beta chains family.</text>
</comment>
<proteinExistence type="inferred from homology"/>
<keyword id="KW-0066">ATP synthesis</keyword>
<keyword id="KW-0067">ATP-binding</keyword>
<keyword id="KW-0997">Cell inner membrane</keyword>
<keyword id="KW-1003">Cell membrane</keyword>
<keyword id="KW-0139">CF(1)</keyword>
<keyword id="KW-0375">Hydrogen ion transport</keyword>
<keyword id="KW-0406">Ion transport</keyword>
<keyword id="KW-0472">Membrane</keyword>
<keyword id="KW-0547">Nucleotide-binding</keyword>
<keyword id="KW-1278">Translocase</keyword>
<keyword id="KW-0813">Transport</keyword>
<sequence>MSANIGKIVQVIGAVVDVEFPSGQLPNILNALDIKNPNNTDAPDLVCEVAQHLGDNIVRTIAMDATEGLVRGMEASDTGKPIMVPVGKASLGRIMNVVGRPVDELGPINADKSLPIHRAAPEFTEQNTKVELLETGIKVVDLLIPFPKGGKMGLFGGAGVGKTVILMEMINNIAKQHGGISVFAGVGERTREGNDLYHEMKDAGVLEKAALIYGQMNEPPGARARVALTALACAEYFRDVENQDVLLFVDNIFRFTQAGSEVSALLGRMPSAVGYQPTLGTDLGALQERITSTTKGSITSVQAVYVPADDLTDPAPATTFSHLDGTLVLSRQIAELGIYPAVDPLDSTSRILDPNVVGVEHYGVARQVQQVLQKYKDLQDIIAILGMDELSDEDKLTVARARRIQRFLSQPFHVAETFTGTPGVYVKLEDTIKGFMGILNGDYDHLAEGDFYMVGGIEMALEKYKKRQEQ</sequence>
<name>ATPB_NITV4</name>
<accession>A1VFJ5</accession>
<organism>
    <name type="scientific">Nitratidesulfovibrio vulgaris (strain DP4)</name>
    <name type="common">Desulfovibrio vulgaris</name>
    <dbReference type="NCBI Taxonomy" id="391774"/>
    <lineage>
        <taxon>Bacteria</taxon>
        <taxon>Pseudomonadati</taxon>
        <taxon>Thermodesulfobacteriota</taxon>
        <taxon>Desulfovibrionia</taxon>
        <taxon>Desulfovibrionales</taxon>
        <taxon>Desulfovibrionaceae</taxon>
        <taxon>Nitratidesulfovibrio</taxon>
    </lineage>
</organism>
<feature type="chain" id="PRO_1000055106" description="ATP synthase subunit beta">
    <location>
        <begin position="1"/>
        <end position="470"/>
    </location>
</feature>
<feature type="binding site" evidence="1">
    <location>
        <begin position="156"/>
        <end position="163"/>
    </location>
    <ligand>
        <name>ATP</name>
        <dbReference type="ChEBI" id="CHEBI:30616"/>
    </ligand>
</feature>
<protein>
    <recommendedName>
        <fullName evidence="1">ATP synthase subunit beta</fullName>
        <ecNumber evidence="1">7.1.2.2</ecNumber>
    </recommendedName>
    <alternativeName>
        <fullName evidence="1">ATP synthase F1 sector subunit beta</fullName>
    </alternativeName>
    <alternativeName>
        <fullName evidence="1">F-ATPase subunit beta</fullName>
    </alternativeName>
</protein>
<gene>
    <name evidence="1" type="primary">atpD</name>
    <name type="ordered locus">Dvul_2195</name>
</gene>
<reference key="1">
    <citation type="journal article" date="2009" name="Environ. Microbiol.">
        <title>Contribution of mobile genetic elements to Desulfovibrio vulgaris genome plasticity.</title>
        <authorList>
            <person name="Walker C.B."/>
            <person name="Stolyar S."/>
            <person name="Chivian D."/>
            <person name="Pinel N."/>
            <person name="Gabster J.A."/>
            <person name="Dehal P.S."/>
            <person name="He Z."/>
            <person name="Yang Z.K."/>
            <person name="Yen H.C."/>
            <person name="Zhou J."/>
            <person name="Wall J.D."/>
            <person name="Hazen T.C."/>
            <person name="Arkin A.P."/>
            <person name="Stahl D.A."/>
        </authorList>
    </citation>
    <scope>NUCLEOTIDE SEQUENCE [LARGE SCALE GENOMIC DNA]</scope>
    <source>
        <strain>DP4</strain>
    </source>
</reference>
<dbReference type="EC" id="7.1.2.2" evidence="1"/>
<dbReference type="EMBL" id="CP000527">
    <property type="protein sequence ID" value="ABM29211.1"/>
    <property type="molecule type" value="Genomic_DNA"/>
</dbReference>
<dbReference type="RefSeq" id="WP_010938076.1">
    <property type="nucleotide sequence ID" value="NC_008751.1"/>
</dbReference>
<dbReference type="SMR" id="A1VFJ5"/>
<dbReference type="KEGG" id="dvl:Dvul_2195"/>
<dbReference type="HOGENOM" id="CLU_022398_0_2_7"/>
<dbReference type="Proteomes" id="UP000009173">
    <property type="component" value="Chromosome"/>
</dbReference>
<dbReference type="GO" id="GO:0005886">
    <property type="term" value="C:plasma membrane"/>
    <property type="evidence" value="ECO:0007669"/>
    <property type="project" value="UniProtKB-SubCell"/>
</dbReference>
<dbReference type="GO" id="GO:0045259">
    <property type="term" value="C:proton-transporting ATP synthase complex"/>
    <property type="evidence" value="ECO:0007669"/>
    <property type="project" value="UniProtKB-KW"/>
</dbReference>
<dbReference type="GO" id="GO:0005524">
    <property type="term" value="F:ATP binding"/>
    <property type="evidence" value="ECO:0007669"/>
    <property type="project" value="UniProtKB-UniRule"/>
</dbReference>
<dbReference type="GO" id="GO:0016887">
    <property type="term" value="F:ATP hydrolysis activity"/>
    <property type="evidence" value="ECO:0007669"/>
    <property type="project" value="InterPro"/>
</dbReference>
<dbReference type="GO" id="GO:0046933">
    <property type="term" value="F:proton-transporting ATP synthase activity, rotational mechanism"/>
    <property type="evidence" value="ECO:0007669"/>
    <property type="project" value="UniProtKB-UniRule"/>
</dbReference>
<dbReference type="CDD" id="cd18110">
    <property type="entry name" value="ATP-synt_F1_beta_C"/>
    <property type="match status" value="1"/>
</dbReference>
<dbReference type="CDD" id="cd18115">
    <property type="entry name" value="ATP-synt_F1_beta_N"/>
    <property type="match status" value="1"/>
</dbReference>
<dbReference type="CDD" id="cd01133">
    <property type="entry name" value="F1-ATPase_beta_CD"/>
    <property type="match status" value="1"/>
</dbReference>
<dbReference type="FunFam" id="1.10.1140.10:FF:000001">
    <property type="entry name" value="ATP synthase subunit beta"/>
    <property type="match status" value="1"/>
</dbReference>
<dbReference type="FunFam" id="2.40.10.170:FF:000005">
    <property type="entry name" value="ATP synthase subunit beta"/>
    <property type="match status" value="1"/>
</dbReference>
<dbReference type="FunFam" id="3.40.50.300:FF:000026">
    <property type="entry name" value="ATP synthase subunit beta"/>
    <property type="match status" value="1"/>
</dbReference>
<dbReference type="Gene3D" id="2.40.10.170">
    <property type="match status" value="1"/>
</dbReference>
<dbReference type="Gene3D" id="1.10.1140.10">
    <property type="entry name" value="Bovine Mitochondrial F1-atpase, Atp Synthase Beta Chain, Chain D, domain 3"/>
    <property type="match status" value="1"/>
</dbReference>
<dbReference type="Gene3D" id="3.40.50.300">
    <property type="entry name" value="P-loop containing nucleotide triphosphate hydrolases"/>
    <property type="match status" value="1"/>
</dbReference>
<dbReference type="HAMAP" id="MF_01347">
    <property type="entry name" value="ATP_synth_beta_bact"/>
    <property type="match status" value="1"/>
</dbReference>
<dbReference type="InterPro" id="IPR003593">
    <property type="entry name" value="AAA+_ATPase"/>
</dbReference>
<dbReference type="InterPro" id="IPR055190">
    <property type="entry name" value="ATP-synt_VA_C"/>
</dbReference>
<dbReference type="InterPro" id="IPR005722">
    <property type="entry name" value="ATP_synth_F1_bsu"/>
</dbReference>
<dbReference type="InterPro" id="IPR020003">
    <property type="entry name" value="ATPase_a/bsu_AS"/>
</dbReference>
<dbReference type="InterPro" id="IPR050053">
    <property type="entry name" value="ATPase_alpha/beta_chains"/>
</dbReference>
<dbReference type="InterPro" id="IPR004100">
    <property type="entry name" value="ATPase_F1/V1/A1_a/bsu_N"/>
</dbReference>
<dbReference type="InterPro" id="IPR036121">
    <property type="entry name" value="ATPase_F1/V1/A1_a/bsu_N_sf"/>
</dbReference>
<dbReference type="InterPro" id="IPR000194">
    <property type="entry name" value="ATPase_F1/V1/A1_a/bsu_nucl-bd"/>
</dbReference>
<dbReference type="InterPro" id="IPR024034">
    <property type="entry name" value="ATPase_F1/V1_b/a_C"/>
</dbReference>
<dbReference type="InterPro" id="IPR027417">
    <property type="entry name" value="P-loop_NTPase"/>
</dbReference>
<dbReference type="NCBIfam" id="TIGR01039">
    <property type="entry name" value="atpD"/>
    <property type="match status" value="1"/>
</dbReference>
<dbReference type="PANTHER" id="PTHR15184">
    <property type="entry name" value="ATP SYNTHASE"/>
    <property type="match status" value="1"/>
</dbReference>
<dbReference type="PANTHER" id="PTHR15184:SF71">
    <property type="entry name" value="ATP SYNTHASE SUBUNIT BETA, MITOCHONDRIAL"/>
    <property type="match status" value="1"/>
</dbReference>
<dbReference type="Pfam" id="PF00006">
    <property type="entry name" value="ATP-synt_ab"/>
    <property type="match status" value="1"/>
</dbReference>
<dbReference type="Pfam" id="PF02874">
    <property type="entry name" value="ATP-synt_ab_N"/>
    <property type="match status" value="1"/>
</dbReference>
<dbReference type="Pfam" id="PF22919">
    <property type="entry name" value="ATP-synt_VA_C"/>
    <property type="match status" value="1"/>
</dbReference>
<dbReference type="PIRSF" id="PIRSF039072">
    <property type="entry name" value="ATPase_subunit_beta"/>
    <property type="match status" value="1"/>
</dbReference>
<dbReference type="SMART" id="SM00382">
    <property type="entry name" value="AAA"/>
    <property type="match status" value="1"/>
</dbReference>
<dbReference type="SUPFAM" id="SSF47917">
    <property type="entry name" value="C-terminal domain of alpha and beta subunits of F1 ATP synthase"/>
    <property type="match status" value="1"/>
</dbReference>
<dbReference type="SUPFAM" id="SSF50615">
    <property type="entry name" value="N-terminal domain of alpha and beta subunits of F1 ATP synthase"/>
    <property type="match status" value="1"/>
</dbReference>
<dbReference type="SUPFAM" id="SSF52540">
    <property type="entry name" value="P-loop containing nucleoside triphosphate hydrolases"/>
    <property type="match status" value="1"/>
</dbReference>
<dbReference type="PROSITE" id="PS00152">
    <property type="entry name" value="ATPASE_ALPHA_BETA"/>
    <property type="match status" value="1"/>
</dbReference>